<sequence length="375" mass="40711">MSELDYYSLLEVERTADDKTIKTSYRRLAMRYHPDRNPGDSDAEERFKAISEAYDCLKDPQKRAAYDRYGKDAFQGGGGFGGFGGGAQDFGGFSDIFESVFGEFMGGRGQARSSVQRGADLRYDLKISLEEAFKGKTVDIEIDVASVCDACHGSGAKAGSGRKTCDTCHGSGRIRVQQGFFVVEQSCPVCQGKGEVISDPCPECHGEGRCEKHKTLSVNIPAGVDDGTRIRLSGEGEAGVHGGPAGDLYIFIHVTPHQVFQRESYNLFAHVPISFTKAALGGSIHVPSLDGEQYEISIPAGIQSGKQLKRRGAGMPVLNGRGRGDLIIQIDVETPTRLTAKQRELLEQFRETETGEECPKSSGFFSKLKTILTGE</sequence>
<feature type="chain" id="PRO_0000070944" description="Chaperone protein DnaJ">
    <location>
        <begin position="1"/>
        <end position="375"/>
    </location>
</feature>
<feature type="domain" description="J" evidence="1">
    <location>
        <begin position="5"/>
        <end position="70"/>
    </location>
</feature>
<feature type="repeat" description="CXXCXGXG motif">
    <location>
        <begin position="148"/>
        <end position="155"/>
    </location>
</feature>
<feature type="repeat" description="CXXCXGXG motif">
    <location>
        <begin position="165"/>
        <end position="172"/>
    </location>
</feature>
<feature type="repeat" description="CXXCXGXG motif">
    <location>
        <begin position="187"/>
        <end position="194"/>
    </location>
</feature>
<feature type="repeat" description="CXXCXGXG motif">
    <location>
        <begin position="201"/>
        <end position="208"/>
    </location>
</feature>
<feature type="zinc finger region" description="CR-type" evidence="1">
    <location>
        <begin position="135"/>
        <end position="213"/>
    </location>
</feature>
<feature type="binding site" evidence="1">
    <location>
        <position position="148"/>
    </location>
    <ligand>
        <name>Zn(2+)</name>
        <dbReference type="ChEBI" id="CHEBI:29105"/>
        <label>1</label>
    </ligand>
</feature>
<feature type="binding site" evidence="1">
    <location>
        <position position="151"/>
    </location>
    <ligand>
        <name>Zn(2+)</name>
        <dbReference type="ChEBI" id="CHEBI:29105"/>
        <label>1</label>
    </ligand>
</feature>
<feature type="binding site" evidence="1">
    <location>
        <position position="165"/>
    </location>
    <ligand>
        <name>Zn(2+)</name>
        <dbReference type="ChEBI" id="CHEBI:29105"/>
        <label>2</label>
    </ligand>
</feature>
<feature type="binding site" evidence="1">
    <location>
        <position position="168"/>
    </location>
    <ligand>
        <name>Zn(2+)</name>
        <dbReference type="ChEBI" id="CHEBI:29105"/>
        <label>2</label>
    </ligand>
</feature>
<feature type="binding site" evidence="1">
    <location>
        <position position="187"/>
    </location>
    <ligand>
        <name>Zn(2+)</name>
        <dbReference type="ChEBI" id="CHEBI:29105"/>
        <label>2</label>
    </ligand>
</feature>
<feature type="binding site" evidence="1">
    <location>
        <position position="190"/>
    </location>
    <ligand>
        <name>Zn(2+)</name>
        <dbReference type="ChEBI" id="CHEBI:29105"/>
        <label>2</label>
    </ligand>
</feature>
<feature type="binding site" evidence="1">
    <location>
        <position position="201"/>
    </location>
    <ligand>
        <name>Zn(2+)</name>
        <dbReference type="ChEBI" id="CHEBI:29105"/>
        <label>1</label>
    </ligand>
</feature>
<feature type="binding site" evidence="1">
    <location>
        <position position="204"/>
    </location>
    <ligand>
        <name>Zn(2+)</name>
        <dbReference type="ChEBI" id="CHEBI:29105"/>
        <label>1</label>
    </ligand>
</feature>
<protein>
    <recommendedName>
        <fullName evidence="1">Chaperone protein DnaJ</fullName>
    </recommendedName>
</protein>
<gene>
    <name evidence="1" type="primary">dnaJ</name>
    <name type="ordered locus">ZMO0661</name>
</gene>
<keyword id="KW-0143">Chaperone</keyword>
<keyword id="KW-0963">Cytoplasm</keyword>
<keyword id="KW-0235">DNA replication</keyword>
<keyword id="KW-0479">Metal-binding</keyword>
<keyword id="KW-1185">Reference proteome</keyword>
<keyword id="KW-0677">Repeat</keyword>
<keyword id="KW-0346">Stress response</keyword>
<keyword id="KW-0862">Zinc</keyword>
<keyword id="KW-0863">Zinc-finger</keyword>
<name>DNAJ_ZYMMO</name>
<accession>Q5NPS5</accession>
<reference key="1">
    <citation type="journal article" date="2005" name="Nat. Biotechnol.">
        <title>The genome sequence of the ethanologenic bacterium Zymomonas mobilis ZM4.</title>
        <authorList>
            <person name="Seo J.-S."/>
            <person name="Chong H."/>
            <person name="Park H.S."/>
            <person name="Yoon K.-O."/>
            <person name="Jung C."/>
            <person name="Kim J.J."/>
            <person name="Hong J.H."/>
            <person name="Kim H."/>
            <person name="Kim J.-H."/>
            <person name="Kil J.-I."/>
            <person name="Park C.J."/>
            <person name="Oh H.-M."/>
            <person name="Lee J.-S."/>
            <person name="Jin S.-J."/>
            <person name="Um H.-W."/>
            <person name="Lee H.-J."/>
            <person name="Oh S.-J."/>
            <person name="Kim J.Y."/>
            <person name="Kang H.L."/>
            <person name="Lee S.Y."/>
            <person name="Lee K.J."/>
            <person name="Kang H.S."/>
        </authorList>
    </citation>
    <scope>NUCLEOTIDE SEQUENCE [LARGE SCALE GENOMIC DNA]</scope>
    <source>
        <strain>ATCC 31821 / ZM4 / CP4</strain>
    </source>
</reference>
<organism>
    <name type="scientific">Zymomonas mobilis subsp. mobilis (strain ATCC 31821 / ZM4 / CP4)</name>
    <dbReference type="NCBI Taxonomy" id="264203"/>
    <lineage>
        <taxon>Bacteria</taxon>
        <taxon>Pseudomonadati</taxon>
        <taxon>Pseudomonadota</taxon>
        <taxon>Alphaproteobacteria</taxon>
        <taxon>Sphingomonadales</taxon>
        <taxon>Zymomonadaceae</taxon>
        <taxon>Zymomonas</taxon>
    </lineage>
</organism>
<proteinExistence type="inferred from homology"/>
<comment type="function">
    <text evidence="1">Participates actively in the response to hyperosmotic and heat shock by preventing the aggregation of stress-denatured proteins and by disaggregating proteins, also in an autonomous, DnaK-independent fashion. Unfolded proteins bind initially to DnaJ; upon interaction with the DnaJ-bound protein, DnaK hydrolyzes its bound ATP, resulting in the formation of a stable complex. GrpE releases ADP from DnaK; ATP binding to DnaK triggers the release of the substrate protein, thus completing the reaction cycle. Several rounds of ATP-dependent interactions between DnaJ, DnaK and GrpE are required for fully efficient folding. Also involved, together with DnaK and GrpE, in the DNA replication of plasmids through activation of initiation proteins.</text>
</comment>
<comment type="cofactor">
    <cofactor evidence="1">
        <name>Zn(2+)</name>
        <dbReference type="ChEBI" id="CHEBI:29105"/>
    </cofactor>
    <text evidence="1">Binds 2 Zn(2+) ions per monomer.</text>
</comment>
<comment type="subunit">
    <text evidence="1">Homodimer.</text>
</comment>
<comment type="subcellular location">
    <subcellularLocation>
        <location evidence="1">Cytoplasm</location>
    </subcellularLocation>
</comment>
<comment type="domain">
    <text evidence="1">The J domain is necessary and sufficient to stimulate DnaK ATPase activity. Zinc center 1 plays an important role in the autonomous, DnaK-independent chaperone activity of DnaJ. Zinc center 2 is essential for interaction with DnaK and for DnaJ activity.</text>
</comment>
<comment type="similarity">
    <text evidence="1">Belongs to the DnaJ family.</text>
</comment>
<dbReference type="EMBL" id="AE008692">
    <property type="protein sequence ID" value="AAV89285.1"/>
    <property type="molecule type" value="Genomic_DNA"/>
</dbReference>
<dbReference type="RefSeq" id="WP_011240554.1">
    <property type="nucleotide sequence ID" value="NZ_CP035711.1"/>
</dbReference>
<dbReference type="SMR" id="Q5NPS5"/>
<dbReference type="STRING" id="264203.ZMO0661"/>
<dbReference type="GeneID" id="79904163"/>
<dbReference type="KEGG" id="zmo:ZMO0661"/>
<dbReference type="eggNOG" id="COG0484">
    <property type="taxonomic scope" value="Bacteria"/>
</dbReference>
<dbReference type="HOGENOM" id="CLU_017633_0_7_5"/>
<dbReference type="Proteomes" id="UP000001173">
    <property type="component" value="Chromosome"/>
</dbReference>
<dbReference type="GO" id="GO:0005737">
    <property type="term" value="C:cytoplasm"/>
    <property type="evidence" value="ECO:0007669"/>
    <property type="project" value="UniProtKB-SubCell"/>
</dbReference>
<dbReference type="GO" id="GO:0005524">
    <property type="term" value="F:ATP binding"/>
    <property type="evidence" value="ECO:0007669"/>
    <property type="project" value="InterPro"/>
</dbReference>
<dbReference type="GO" id="GO:0031072">
    <property type="term" value="F:heat shock protein binding"/>
    <property type="evidence" value="ECO:0007669"/>
    <property type="project" value="InterPro"/>
</dbReference>
<dbReference type="GO" id="GO:0051082">
    <property type="term" value="F:unfolded protein binding"/>
    <property type="evidence" value="ECO:0007669"/>
    <property type="project" value="UniProtKB-UniRule"/>
</dbReference>
<dbReference type="GO" id="GO:0008270">
    <property type="term" value="F:zinc ion binding"/>
    <property type="evidence" value="ECO:0007669"/>
    <property type="project" value="UniProtKB-UniRule"/>
</dbReference>
<dbReference type="GO" id="GO:0051085">
    <property type="term" value="P:chaperone cofactor-dependent protein refolding"/>
    <property type="evidence" value="ECO:0007669"/>
    <property type="project" value="TreeGrafter"/>
</dbReference>
<dbReference type="GO" id="GO:0006260">
    <property type="term" value="P:DNA replication"/>
    <property type="evidence" value="ECO:0007669"/>
    <property type="project" value="UniProtKB-KW"/>
</dbReference>
<dbReference type="GO" id="GO:0042026">
    <property type="term" value="P:protein refolding"/>
    <property type="evidence" value="ECO:0007669"/>
    <property type="project" value="TreeGrafter"/>
</dbReference>
<dbReference type="GO" id="GO:0009408">
    <property type="term" value="P:response to heat"/>
    <property type="evidence" value="ECO:0007669"/>
    <property type="project" value="InterPro"/>
</dbReference>
<dbReference type="CDD" id="cd06257">
    <property type="entry name" value="DnaJ"/>
    <property type="match status" value="1"/>
</dbReference>
<dbReference type="CDD" id="cd10747">
    <property type="entry name" value="DnaJ_C"/>
    <property type="match status" value="1"/>
</dbReference>
<dbReference type="FunFam" id="1.10.287.110:FF:000034">
    <property type="entry name" value="Chaperone protein DnaJ"/>
    <property type="match status" value="1"/>
</dbReference>
<dbReference type="FunFam" id="2.60.260.20:FF:000005">
    <property type="entry name" value="Chaperone protein dnaJ 1, mitochondrial"/>
    <property type="match status" value="1"/>
</dbReference>
<dbReference type="FunFam" id="2.10.230.10:FF:000002">
    <property type="entry name" value="Molecular chaperone DnaJ"/>
    <property type="match status" value="1"/>
</dbReference>
<dbReference type="Gene3D" id="1.10.287.110">
    <property type="entry name" value="DnaJ domain"/>
    <property type="match status" value="1"/>
</dbReference>
<dbReference type="Gene3D" id="2.10.230.10">
    <property type="entry name" value="Heat shock protein DnaJ, cysteine-rich domain"/>
    <property type="match status" value="1"/>
</dbReference>
<dbReference type="Gene3D" id="2.60.260.20">
    <property type="entry name" value="Urease metallochaperone UreE, N-terminal domain"/>
    <property type="match status" value="2"/>
</dbReference>
<dbReference type="HAMAP" id="MF_01152">
    <property type="entry name" value="DnaJ"/>
    <property type="match status" value="1"/>
</dbReference>
<dbReference type="InterPro" id="IPR012724">
    <property type="entry name" value="DnaJ"/>
</dbReference>
<dbReference type="InterPro" id="IPR002939">
    <property type="entry name" value="DnaJ_C"/>
</dbReference>
<dbReference type="InterPro" id="IPR001623">
    <property type="entry name" value="DnaJ_domain"/>
</dbReference>
<dbReference type="InterPro" id="IPR018253">
    <property type="entry name" value="DnaJ_domain_CS"/>
</dbReference>
<dbReference type="InterPro" id="IPR008971">
    <property type="entry name" value="HSP40/DnaJ_pept-bd"/>
</dbReference>
<dbReference type="InterPro" id="IPR001305">
    <property type="entry name" value="HSP_DnaJ_Cys-rich_dom"/>
</dbReference>
<dbReference type="InterPro" id="IPR036410">
    <property type="entry name" value="HSP_DnaJ_Cys-rich_dom_sf"/>
</dbReference>
<dbReference type="InterPro" id="IPR036869">
    <property type="entry name" value="J_dom_sf"/>
</dbReference>
<dbReference type="NCBIfam" id="TIGR02349">
    <property type="entry name" value="DnaJ_bact"/>
    <property type="match status" value="1"/>
</dbReference>
<dbReference type="NCBIfam" id="NF008035">
    <property type="entry name" value="PRK10767.1"/>
    <property type="match status" value="1"/>
</dbReference>
<dbReference type="PANTHER" id="PTHR43096:SF48">
    <property type="entry name" value="CHAPERONE PROTEIN DNAJ"/>
    <property type="match status" value="1"/>
</dbReference>
<dbReference type="PANTHER" id="PTHR43096">
    <property type="entry name" value="DNAJ HOMOLOG 1, MITOCHONDRIAL-RELATED"/>
    <property type="match status" value="1"/>
</dbReference>
<dbReference type="Pfam" id="PF00226">
    <property type="entry name" value="DnaJ"/>
    <property type="match status" value="1"/>
</dbReference>
<dbReference type="Pfam" id="PF01556">
    <property type="entry name" value="DnaJ_C"/>
    <property type="match status" value="1"/>
</dbReference>
<dbReference type="Pfam" id="PF00684">
    <property type="entry name" value="DnaJ_CXXCXGXG"/>
    <property type="match status" value="1"/>
</dbReference>
<dbReference type="PRINTS" id="PR00625">
    <property type="entry name" value="JDOMAIN"/>
</dbReference>
<dbReference type="SMART" id="SM00271">
    <property type="entry name" value="DnaJ"/>
    <property type="match status" value="1"/>
</dbReference>
<dbReference type="SUPFAM" id="SSF46565">
    <property type="entry name" value="Chaperone J-domain"/>
    <property type="match status" value="1"/>
</dbReference>
<dbReference type="SUPFAM" id="SSF57938">
    <property type="entry name" value="DnaJ/Hsp40 cysteine-rich domain"/>
    <property type="match status" value="1"/>
</dbReference>
<dbReference type="SUPFAM" id="SSF49493">
    <property type="entry name" value="HSP40/DnaJ peptide-binding domain"/>
    <property type="match status" value="2"/>
</dbReference>
<dbReference type="PROSITE" id="PS00636">
    <property type="entry name" value="DNAJ_1"/>
    <property type="match status" value="1"/>
</dbReference>
<dbReference type="PROSITE" id="PS50076">
    <property type="entry name" value="DNAJ_2"/>
    <property type="match status" value="1"/>
</dbReference>
<dbReference type="PROSITE" id="PS51188">
    <property type="entry name" value="ZF_CR"/>
    <property type="match status" value="1"/>
</dbReference>
<evidence type="ECO:0000255" key="1">
    <source>
        <dbReference type="HAMAP-Rule" id="MF_01152"/>
    </source>
</evidence>